<protein>
    <recommendedName>
        <fullName>NAD-dependent dihydropyrimidine dehydrogenase subunit PreT</fullName>
        <shortName>DPD</shortName>
        <ecNumber>1.3.1.1</ecNumber>
    </recommendedName>
    <alternativeName>
        <fullName>Dihydrothymine dehydrogenase</fullName>
    </alternativeName>
    <alternativeName>
        <fullName>Dihydrouracil dehydrogenase</fullName>
    </alternativeName>
</protein>
<proteinExistence type="inferred from homology"/>
<organism>
    <name type="scientific">Escherichia coli O157:H7</name>
    <dbReference type="NCBI Taxonomy" id="83334"/>
    <lineage>
        <taxon>Bacteria</taxon>
        <taxon>Pseudomonadati</taxon>
        <taxon>Pseudomonadota</taxon>
        <taxon>Gammaproteobacteria</taxon>
        <taxon>Enterobacterales</taxon>
        <taxon>Enterobacteriaceae</taxon>
        <taxon>Escherichia</taxon>
    </lineage>
</organism>
<accession>Q8X645</accession>
<comment type="function">
    <text evidence="1">Involved in pyrimidine base degradation. Catalyzes physiologically the reduction of uracil to 5,6-dihydrouracil (DHU) by using NADH as a specific cosubstrate. It also catalyzes the reverse reaction and the reduction of thymine to 5,6-dihydrothymine (DHT) (By similarity).</text>
</comment>
<comment type="catalytic activity">
    <reaction>
        <text>5,6-dihydrouracil + NAD(+) = uracil + NADH + H(+)</text>
        <dbReference type="Rhea" id="RHEA:20189"/>
        <dbReference type="ChEBI" id="CHEBI:15378"/>
        <dbReference type="ChEBI" id="CHEBI:15901"/>
        <dbReference type="ChEBI" id="CHEBI:17568"/>
        <dbReference type="ChEBI" id="CHEBI:57540"/>
        <dbReference type="ChEBI" id="CHEBI:57945"/>
        <dbReference type="EC" id="1.3.1.1"/>
    </reaction>
</comment>
<comment type="catalytic activity">
    <reaction>
        <text>5,6-dihydrothymine + NAD(+) = thymine + NADH + H(+)</text>
        <dbReference type="Rhea" id="RHEA:28791"/>
        <dbReference type="ChEBI" id="CHEBI:15378"/>
        <dbReference type="ChEBI" id="CHEBI:17821"/>
        <dbReference type="ChEBI" id="CHEBI:27468"/>
        <dbReference type="ChEBI" id="CHEBI:57540"/>
        <dbReference type="ChEBI" id="CHEBI:57945"/>
        <dbReference type="EC" id="1.3.1.1"/>
    </reaction>
</comment>
<comment type="subunit">
    <text evidence="1">Heterotetramer of 2 PreA and 2 PreT subunits.</text>
</comment>
<comment type="similarity">
    <text evidence="2">Belongs to the NADH dehydrogenase family.</text>
</comment>
<sequence>MPQQNYLDELTPAFTPLLAIKEASRCLLCHDAPCSQACPAQTDPGKFIRSIYFRNFKGAAETIRENNALGAVCARVCPTEKLCQSGCTRAGVDAPIDIGRLQRFVTDFEQQTGMEIYQPGTKTLGKVAIIGAGPAGLQASVTLTNQGYDVTIYEKEAHPGGWLRNGIPQFRLPQSVLDAEIARIEKMGVTIKCNNEIGKTLTLEQLKAENRAVLVTVGLSSGSGLPLFEHSDVEIAVDFLLRARQAQGDISIPQSALIIGGGDVAMDVASTLKVLGCQAVTCVAREELDEFPASEKEFASARELGVSIIDGFTPVAVEGNKVTFKHVRLSGELTMAADKIILAVGQHARLDDFAKLEPQRNTIKTQNYQTRDPQVFAAGDIVEGDKTVVYAVKTGKEAAEAIHHYLEGACSC</sequence>
<gene>
    <name type="primary">preT</name>
    <name type="synonym">yeiT</name>
    <name type="ordered locus">Z3401</name>
    <name type="ordered locus">ECs3038</name>
</gene>
<keyword id="KW-0520">NAD</keyword>
<keyword id="KW-0560">Oxidoreductase</keyword>
<keyword id="KW-1185">Reference proteome</keyword>
<evidence type="ECO:0000250" key="1"/>
<evidence type="ECO:0000305" key="2"/>
<feature type="chain" id="PRO_0000169157" description="NAD-dependent dihydropyrimidine dehydrogenase subunit PreT">
    <location>
        <begin position="1"/>
        <end position="412"/>
    </location>
</feature>
<feature type="binding site" evidence="1">
    <location>
        <position position="286"/>
    </location>
    <ligand>
        <name>NAD(+)</name>
        <dbReference type="ChEBI" id="CHEBI:57540"/>
    </ligand>
</feature>
<dbReference type="EC" id="1.3.1.1"/>
<dbReference type="EMBL" id="AE005174">
    <property type="protein sequence ID" value="AAG57284.1"/>
    <property type="molecule type" value="Genomic_DNA"/>
</dbReference>
<dbReference type="EMBL" id="BA000007">
    <property type="protein sequence ID" value="BAB36461.1"/>
    <property type="molecule type" value="Genomic_DNA"/>
</dbReference>
<dbReference type="PIR" id="F91008">
    <property type="entry name" value="F91008"/>
</dbReference>
<dbReference type="PIR" id="H85852">
    <property type="entry name" value="H85852"/>
</dbReference>
<dbReference type="RefSeq" id="NP_311065.1">
    <property type="nucleotide sequence ID" value="NC_002695.1"/>
</dbReference>
<dbReference type="RefSeq" id="WP_001136321.1">
    <property type="nucleotide sequence ID" value="NZ_VOAI01000001.1"/>
</dbReference>
<dbReference type="SMR" id="Q8X645"/>
<dbReference type="STRING" id="155864.Z3401"/>
<dbReference type="GeneID" id="916742"/>
<dbReference type="KEGG" id="ece:Z3401"/>
<dbReference type="KEGG" id="ecs:ECs_3038"/>
<dbReference type="PATRIC" id="fig|386585.9.peg.3163"/>
<dbReference type="eggNOG" id="COG0493">
    <property type="taxonomic scope" value="Bacteria"/>
</dbReference>
<dbReference type="HOGENOM" id="CLU_000422_3_3_6"/>
<dbReference type="OMA" id="QACVRNN"/>
<dbReference type="Proteomes" id="UP000000558">
    <property type="component" value="Chromosome"/>
</dbReference>
<dbReference type="Proteomes" id="UP000002519">
    <property type="component" value="Chromosome"/>
</dbReference>
<dbReference type="GO" id="GO:0004159">
    <property type="term" value="F:dihydropyrimidine dehydrogenase (NAD+) activity"/>
    <property type="evidence" value="ECO:0007669"/>
    <property type="project" value="UniProtKB-EC"/>
</dbReference>
<dbReference type="GO" id="GO:0051536">
    <property type="term" value="F:iron-sulfur cluster binding"/>
    <property type="evidence" value="ECO:0007669"/>
    <property type="project" value="InterPro"/>
</dbReference>
<dbReference type="FunFam" id="1.10.1060.10:FF:000013">
    <property type="entry name" value="NAD-dependent dihydropyrimidine dehydrogenase subunit PreT"/>
    <property type="match status" value="1"/>
</dbReference>
<dbReference type="FunFam" id="3.50.50.60:FF:000148">
    <property type="entry name" value="NAD-dependent dihydropyrimidine dehydrogenase subunit PreT"/>
    <property type="match status" value="1"/>
</dbReference>
<dbReference type="FunFam" id="3.50.50.60:FF:000157">
    <property type="entry name" value="NAD-dependent dihydropyrimidine dehydrogenase subunit PreT"/>
    <property type="match status" value="1"/>
</dbReference>
<dbReference type="Gene3D" id="1.10.1060.10">
    <property type="entry name" value="Alpha-helical ferredoxin"/>
    <property type="match status" value="1"/>
</dbReference>
<dbReference type="Gene3D" id="3.50.50.60">
    <property type="entry name" value="FAD/NAD(P)-binding domain"/>
    <property type="match status" value="2"/>
</dbReference>
<dbReference type="InterPro" id="IPR028261">
    <property type="entry name" value="DPD_II"/>
</dbReference>
<dbReference type="InterPro" id="IPR036188">
    <property type="entry name" value="FAD/NAD-bd_sf"/>
</dbReference>
<dbReference type="InterPro" id="IPR023753">
    <property type="entry name" value="FAD/NAD-binding_dom"/>
</dbReference>
<dbReference type="InterPro" id="IPR009051">
    <property type="entry name" value="Helical_ferredxn"/>
</dbReference>
<dbReference type="PANTHER" id="PTHR43073">
    <property type="entry name" value="DIHYDROPYRIMIDINE DEHYDROGENASE [NADP(+)]"/>
    <property type="match status" value="1"/>
</dbReference>
<dbReference type="PANTHER" id="PTHR43073:SF2">
    <property type="entry name" value="DIHYDROPYRIMIDINE DEHYDROGENASE [NADP(+)]"/>
    <property type="match status" value="1"/>
</dbReference>
<dbReference type="Pfam" id="PF14691">
    <property type="entry name" value="Fer4_20"/>
    <property type="match status" value="1"/>
</dbReference>
<dbReference type="Pfam" id="PF07992">
    <property type="entry name" value="Pyr_redox_2"/>
    <property type="match status" value="1"/>
</dbReference>
<dbReference type="PRINTS" id="PR00419">
    <property type="entry name" value="ADXRDTASE"/>
</dbReference>
<dbReference type="SUPFAM" id="SSF46548">
    <property type="entry name" value="alpha-helical ferredoxin"/>
    <property type="match status" value="1"/>
</dbReference>
<dbReference type="SUPFAM" id="SSF51971">
    <property type="entry name" value="Nucleotide-binding domain"/>
    <property type="match status" value="1"/>
</dbReference>
<reference key="1">
    <citation type="journal article" date="2001" name="Nature">
        <title>Genome sequence of enterohaemorrhagic Escherichia coli O157:H7.</title>
        <authorList>
            <person name="Perna N.T."/>
            <person name="Plunkett G. III"/>
            <person name="Burland V."/>
            <person name="Mau B."/>
            <person name="Glasner J.D."/>
            <person name="Rose D.J."/>
            <person name="Mayhew G.F."/>
            <person name="Evans P.S."/>
            <person name="Gregor J."/>
            <person name="Kirkpatrick H.A."/>
            <person name="Posfai G."/>
            <person name="Hackett J."/>
            <person name="Klink S."/>
            <person name="Boutin A."/>
            <person name="Shao Y."/>
            <person name="Miller L."/>
            <person name="Grotbeck E.J."/>
            <person name="Davis N.W."/>
            <person name="Lim A."/>
            <person name="Dimalanta E.T."/>
            <person name="Potamousis K."/>
            <person name="Apodaca J."/>
            <person name="Anantharaman T.S."/>
            <person name="Lin J."/>
            <person name="Yen G."/>
            <person name="Schwartz D.C."/>
            <person name="Welch R.A."/>
            <person name="Blattner F.R."/>
        </authorList>
    </citation>
    <scope>NUCLEOTIDE SEQUENCE [LARGE SCALE GENOMIC DNA]</scope>
    <source>
        <strain>O157:H7 / EDL933 / ATCC 700927 / EHEC</strain>
    </source>
</reference>
<reference key="2">
    <citation type="journal article" date="2001" name="DNA Res.">
        <title>Complete genome sequence of enterohemorrhagic Escherichia coli O157:H7 and genomic comparison with a laboratory strain K-12.</title>
        <authorList>
            <person name="Hayashi T."/>
            <person name="Makino K."/>
            <person name="Ohnishi M."/>
            <person name="Kurokawa K."/>
            <person name="Ishii K."/>
            <person name="Yokoyama K."/>
            <person name="Han C.-G."/>
            <person name="Ohtsubo E."/>
            <person name="Nakayama K."/>
            <person name="Murata T."/>
            <person name="Tanaka M."/>
            <person name="Tobe T."/>
            <person name="Iida T."/>
            <person name="Takami H."/>
            <person name="Honda T."/>
            <person name="Sasakawa C."/>
            <person name="Ogasawara N."/>
            <person name="Yasunaga T."/>
            <person name="Kuhara S."/>
            <person name="Shiba T."/>
            <person name="Hattori M."/>
            <person name="Shinagawa H."/>
        </authorList>
    </citation>
    <scope>NUCLEOTIDE SEQUENCE [LARGE SCALE GENOMIC DNA]</scope>
    <source>
        <strain>O157:H7 / Sakai / RIMD 0509952 / EHEC</strain>
    </source>
</reference>
<name>PRET_ECO57</name>